<proteinExistence type="inferred from homology"/>
<reference key="1">
    <citation type="journal article" date="2011" name="J. Bacteriol.">
        <title>Complete genome sequence and updated annotation of Desulfovibrio alaskensis G20.</title>
        <authorList>
            <person name="Hauser L.J."/>
            <person name="Land M.L."/>
            <person name="Brown S.D."/>
            <person name="Larimer F."/>
            <person name="Keller K.L."/>
            <person name="Rapp-Giles B.J."/>
            <person name="Price M.N."/>
            <person name="Lin M."/>
            <person name="Bruce D.C."/>
            <person name="Detter J.C."/>
            <person name="Tapia R."/>
            <person name="Han C.S."/>
            <person name="Goodwin L.A."/>
            <person name="Cheng J.F."/>
            <person name="Pitluck S."/>
            <person name="Copeland A."/>
            <person name="Lucas S."/>
            <person name="Nolan M."/>
            <person name="Lapidus A.L."/>
            <person name="Palumbo A.V."/>
            <person name="Wall J.D."/>
        </authorList>
    </citation>
    <scope>NUCLEOTIDE SEQUENCE [LARGE SCALE GENOMIC DNA]</scope>
    <source>
        <strain>ATCC BAA-1058 / DSM 17464 / G20</strain>
    </source>
</reference>
<dbReference type="EC" id="7.3.2.1" evidence="1"/>
<dbReference type="EMBL" id="CP000112">
    <property type="protein sequence ID" value="ABB39183.1"/>
    <property type="molecule type" value="Genomic_DNA"/>
</dbReference>
<dbReference type="RefSeq" id="WP_011368257.1">
    <property type="nucleotide sequence ID" value="NC_007519.1"/>
</dbReference>
<dbReference type="SMR" id="Q30YR3"/>
<dbReference type="STRING" id="207559.Dde_2386"/>
<dbReference type="KEGG" id="dde:Dde_2386"/>
<dbReference type="eggNOG" id="COG1117">
    <property type="taxonomic scope" value="Bacteria"/>
</dbReference>
<dbReference type="HOGENOM" id="CLU_000604_1_22_7"/>
<dbReference type="Proteomes" id="UP000002710">
    <property type="component" value="Chromosome"/>
</dbReference>
<dbReference type="GO" id="GO:0005886">
    <property type="term" value="C:plasma membrane"/>
    <property type="evidence" value="ECO:0007669"/>
    <property type="project" value="UniProtKB-SubCell"/>
</dbReference>
<dbReference type="GO" id="GO:0005524">
    <property type="term" value="F:ATP binding"/>
    <property type="evidence" value="ECO:0007669"/>
    <property type="project" value="UniProtKB-KW"/>
</dbReference>
<dbReference type="GO" id="GO:0016887">
    <property type="term" value="F:ATP hydrolysis activity"/>
    <property type="evidence" value="ECO:0007669"/>
    <property type="project" value="InterPro"/>
</dbReference>
<dbReference type="GO" id="GO:0015415">
    <property type="term" value="F:ATPase-coupled phosphate ion transmembrane transporter activity"/>
    <property type="evidence" value="ECO:0007669"/>
    <property type="project" value="UniProtKB-EC"/>
</dbReference>
<dbReference type="GO" id="GO:0035435">
    <property type="term" value="P:phosphate ion transmembrane transport"/>
    <property type="evidence" value="ECO:0007669"/>
    <property type="project" value="InterPro"/>
</dbReference>
<dbReference type="CDD" id="cd03260">
    <property type="entry name" value="ABC_PstB_phosphate_transporter"/>
    <property type="match status" value="1"/>
</dbReference>
<dbReference type="FunFam" id="3.40.50.300:FF:000132">
    <property type="entry name" value="Phosphate import ATP-binding protein PstB"/>
    <property type="match status" value="1"/>
</dbReference>
<dbReference type="Gene3D" id="3.40.50.300">
    <property type="entry name" value="P-loop containing nucleotide triphosphate hydrolases"/>
    <property type="match status" value="1"/>
</dbReference>
<dbReference type="InterPro" id="IPR003593">
    <property type="entry name" value="AAA+_ATPase"/>
</dbReference>
<dbReference type="InterPro" id="IPR003439">
    <property type="entry name" value="ABC_transporter-like_ATP-bd"/>
</dbReference>
<dbReference type="InterPro" id="IPR017871">
    <property type="entry name" value="ABC_transporter-like_CS"/>
</dbReference>
<dbReference type="InterPro" id="IPR027417">
    <property type="entry name" value="P-loop_NTPase"/>
</dbReference>
<dbReference type="InterPro" id="IPR005670">
    <property type="entry name" value="PstB-like"/>
</dbReference>
<dbReference type="NCBIfam" id="TIGR00972">
    <property type="entry name" value="3a0107s01c2"/>
    <property type="match status" value="1"/>
</dbReference>
<dbReference type="PANTHER" id="PTHR43423">
    <property type="entry name" value="ABC TRANSPORTER I FAMILY MEMBER 17"/>
    <property type="match status" value="1"/>
</dbReference>
<dbReference type="PANTHER" id="PTHR43423:SF1">
    <property type="entry name" value="ABC TRANSPORTER I FAMILY MEMBER 17"/>
    <property type="match status" value="1"/>
</dbReference>
<dbReference type="Pfam" id="PF00005">
    <property type="entry name" value="ABC_tran"/>
    <property type="match status" value="1"/>
</dbReference>
<dbReference type="SMART" id="SM00382">
    <property type="entry name" value="AAA"/>
    <property type="match status" value="1"/>
</dbReference>
<dbReference type="SUPFAM" id="SSF52540">
    <property type="entry name" value="P-loop containing nucleoside triphosphate hydrolases"/>
    <property type="match status" value="1"/>
</dbReference>
<dbReference type="PROSITE" id="PS00211">
    <property type="entry name" value="ABC_TRANSPORTER_1"/>
    <property type="match status" value="1"/>
</dbReference>
<dbReference type="PROSITE" id="PS50893">
    <property type="entry name" value="ABC_TRANSPORTER_2"/>
    <property type="match status" value="1"/>
</dbReference>
<dbReference type="PROSITE" id="PS51238">
    <property type="entry name" value="PSTB"/>
    <property type="match status" value="1"/>
</dbReference>
<gene>
    <name evidence="1" type="primary">pstB</name>
    <name type="ordered locus">Dde_2386</name>
</gene>
<accession>Q30YR3</accession>
<keyword id="KW-0067">ATP-binding</keyword>
<keyword id="KW-0997">Cell inner membrane</keyword>
<keyword id="KW-1003">Cell membrane</keyword>
<keyword id="KW-0472">Membrane</keyword>
<keyword id="KW-0547">Nucleotide-binding</keyword>
<keyword id="KW-0592">Phosphate transport</keyword>
<keyword id="KW-1185">Reference proteome</keyword>
<keyword id="KW-1278">Translocase</keyword>
<keyword id="KW-0813">Transport</keyword>
<feature type="chain" id="PRO_0000272449" description="Phosphate import ATP-binding protein PstB">
    <location>
        <begin position="1"/>
        <end position="253"/>
    </location>
</feature>
<feature type="domain" description="ABC transporter" evidence="1">
    <location>
        <begin position="7"/>
        <end position="248"/>
    </location>
</feature>
<feature type="binding site" evidence="1">
    <location>
        <begin position="39"/>
        <end position="46"/>
    </location>
    <ligand>
        <name>ATP</name>
        <dbReference type="ChEBI" id="CHEBI:30616"/>
    </ligand>
</feature>
<name>PSTB_OLEA2</name>
<organism>
    <name type="scientific">Oleidesulfovibrio alaskensis (strain ATCC BAA-1058 / DSM 17464 / G20)</name>
    <name type="common">Desulfovibrio alaskensis</name>
    <dbReference type="NCBI Taxonomy" id="207559"/>
    <lineage>
        <taxon>Bacteria</taxon>
        <taxon>Pseudomonadati</taxon>
        <taxon>Thermodesulfobacteriota</taxon>
        <taxon>Desulfovibrionia</taxon>
        <taxon>Desulfovibrionales</taxon>
        <taxon>Desulfovibrionaceae</taxon>
        <taxon>Oleidesulfovibrio</taxon>
    </lineage>
</organism>
<protein>
    <recommendedName>
        <fullName evidence="1">Phosphate import ATP-binding protein PstB</fullName>
        <ecNumber evidence="1">7.3.2.1</ecNumber>
    </recommendedName>
    <alternativeName>
        <fullName evidence="1">ABC phosphate transporter</fullName>
    </alternativeName>
    <alternativeName>
        <fullName evidence="1">Phosphate-transporting ATPase</fullName>
    </alternativeName>
</protein>
<sequence length="253" mass="28458">MASLTKMHSKGLDFFYGDFQALHDISLEFSNNQVTALIGPSGCGKSTFLRCLNRMNDLIPISRVEGEICLDNDNIYDPQVDVVELRRRVGMVFQKPNPFPKSIYENVAYGLRVNGVKDKNCLEDKVEESLRHAALWDEVKDRLHDSALGLSGGQQQRLCIARALAVEPEVLLMDEPASALDPIATQKIEELIHTLKQKYTIIIVTHSMQQAARVSDVTAFFYMGRLIETGDTEVMFTRPGNKQTEDYITGRFG</sequence>
<evidence type="ECO:0000255" key="1">
    <source>
        <dbReference type="HAMAP-Rule" id="MF_01702"/>
    </source>
</evidence>
<comment type="function">
    <text evidence="1">Part of the ABC transporter complex PstSACB involved in phosphate import. Responsible for energy coupling to the transport system.</text>
</comment>
<comment type="catalytic activity">
    <reaction evidence="1">
        <text>phosphate(out) + ATP + H2O = ADP + 2 phosphate(in) + H(+)</text>
        <dbReference type="Rhea" id="RHEA:24440"/>
        <dbReference type="ChEBI" id="CHEBI:15377"/>
        <dbReference type="ChEBI" id="CHEBI:15378"/>
        <dbReference type="ChEBI" id="CHEBI:30616"/>
        <dbReference type="ChEBI" id="CHEBI:43474"/>
        <dbReference type="ChEBI" id="CHEBI:456216"/>
        <dbReference type="EC" id="7.3.2.1"/>
    </reaction>
</comment>
<comment type="subunit">
    <text evidence="1">The complex is composed of two ATP-binding proteins (PstB), two transmembrane proteins (PstC and PstA) and a solute-binding protein (PstS).</text>
</comment>
<comment type="subcellular location">
    <subcellularLocation>
        <location evidence="1">Cell inner membrane</location>
        <topology evidence="1">Peripheral membrane protein</topology>
    </subcellularLocation>
</comment>
<comment type="similarity">
    <text evidence="1">Belongs to the ABC transporter superfamily. Phosphate importer (TC 3.A.1.7) family.</text>
</comment>